<gene>
    <name type="primary">Adam29</name>
</gene>
<accession>Q811Q4</accession>
<comment type="function">
    <text evidence="1">May be involved in spermatogenesis and fertilization. Seems to be a non catalytic metalloprotease-like protein (By similarity).</text>
</comment>
<comment type="subcellular location">
    <subcellularLocation>
        <location evidence="1">Membrane</location>
        <topology evidence="1">Single-pass type I membrane protein</topology>
    </subcellularLocation>
</comment>
<keyword id="KW-1015">Disulfide bond</keyword>
<keyword id="KW-0245">EGF-like domain</keyword>
<keyword id="KW-0325">Glycoprotein</keyword>
<keyword id="KW-0472">Membrane</keyword>
<keyword id="KW-1185">Reference proteome</keyword>
<keyword id="KW-0732">Signal</keyword>
<keyword id="KW-0812">Transmembrane</keyword>
<keyword id="KW-1133">Transmembrane helix</keyword>
<evidence type="ECO:0000250" key="1"/>
<evidence type="ECO:0000255" key="2"/>
<evidence type="ECO:0000255" key="3">
    <source>
        <dbReference type="PROSITE-ProRule" id="PRU00068"/>
    </source>
</evidence>
<evidence type="ECO:0000255" key="4">
    <source>
        <dbReference type="PROSITE-ProRule" id="PRU00276"/>
    </source>
</evidence>
<evidence type="ECO:0000256" key="5">
    <source>
        <dbReference type="SAM" id="MobiDB-lite"/>
    </source>
</evidence>
<sequence length="763" mass="86445">MNMIEALLSMRVLFLTQVFGIFLCFPGLTKAGHLHYHSSIEVVIPMKVTEKTRGMNLPNWISYSLKLGGQRYIIHMKIKNLFLTRHLPVFTYSDQDSLLEDYPFVQDDCYYQGYVEGDSESLVSLSSCFGGFHGLLEINNIVYEIMPKKFSRKFEHLVYKVDINKTESRGSSLMQDNITCQVELQKSGNPILKQSSFEDWWTHTKIVELVVVVDKTLYDHYGNYTVMLSDLYSVINIVDTIYEVIGIKILLVGVEVWNKKNLIVIDDVSKSLRLYCRWKASNFLHRLKHDVSHLFIYRHLRGLSGIGSTGGICDPKRSCAVVTFIDRTLNLRAIGVAHHLGHNLGMKHDEDICKCSYSKCIMHMDSPPIPKFSNCSYNYFWSYTVKNTRCLMENMYTKDIFDRTRCGNGVVEDKEQCDCGSLRNCTNDLCCMSNCTLSTGSSCAFGLCCKNCQFLPSGTLCRKRDNICDLPEWCNGTSHECPDDAYVEDGIPCGVSAYCYEKQCNDRNEHCRQIFGQNAKTASVHCYREINTKGDRFGHCGLQGPTYIKCKSNDALCGRIQCDNVVQIPNMKDHSTIHFALVKNVSCWGTDYHTGTSLTDIGDVKDGTECEQNHICINRHCVHISTLDSNCTPAFCNYRGICNNKHHCHCNFHWDPPNCMIRGHGGSVDSGLPPKTNKKKHFFYLLLLQLIILACLLSCLLWLLFNIKGSKRKPQVQPTPVKTKKVSKKVPSQKPSPVPSPSLPQLRMPSRSASPTSSIKSTN</sequence>
<name>ADA29_MOUSE</name>
<proteinExistence type="evidence at transcript level"/>
<dbReference type="EMBL" id="AY190759">
    <property type="protein sequence ID" value="AAO38663.1"/>
    <property type="molecule type" value="mRNA"/>
</dbReference>
<dbReference type="EMBL" id="BC119089">
    <property type="protein sequence ID" value="AAI19090.1"/>
    <property type="molecule type" value="mRNA"/>
</dbReference>
<dbReference type="EMBL" id="BC119091">
    <property type="protein sequence ID" value="AAI19092.1"/>
    <property type="molecule type" value="mRNA"/>
</dbReference>
<dbReference type="CCDS" id="CCDS22311.1"/>
<dbReference type="SMR" id="Q811Q4"/>
<dbReference type="FunCoup" id="Q811Q4">
    <property type="interactions" value="19"/>
</dbReference>
<dbReference type="STRING" id="10090.ENSMUSP00000054292"/>
<dbReference type="MEROPS" id="M12.984"/>
<dbReference type="GlyCosmos" id="Q811Q4">
    <property type="glycosylation" value="8 sites, No reported glycans"/>
</dbReference>
<dbReference type="GlyGen" id="Q811Q4">
    <property type="glycosylation" value="9 sites"/>
</dbReference>
<dbReference type="iPTMnet" id="Q811Q4"/>
<dbReference type="PhosphoSitePlus" id="Q811Q4"/>
<dbReference type="SwissPalm" id="Q811Q4"/>
<dbReference type="PaxDb" id="10090-ENSMUSP00000054292"/>
<dbReference type="ProteomicsDB" id="285885"/>
<dbReference type="AGR" id="MGI:2676326"/>
<dbReference type="MGI" id="MGI:2676326">
    <property type="gene designation" value="Adam29"/>
</dbReference>
<dbReference type="eggNOG" id="KOG3607">
    <property type="taxonomic scope" value="Eukaryota"/>
</dbReference>
<dbReference type="InParanoid" id="Q811Q4"/>
<dbReference type="PhylomeDB" id="Q811Q4"/>
<dbReference type="PRO" id="PR:Q811Q4"/>
<dbReference type="Proteomes" id="UP000000589">
    <property type="component" value="Unplaced"/>
</dbReference>
<dbReference type="RNAct" id="Q811Q4">
    <property type="molecule type" value="protein"/>
</dbReference>
<dbReference type="GO" id="GO:0009897">
    <property type="term" value="C:external side of plasma membrane"/>
    <property type="evidence" value="ECO:0000314"/>
    <property type="project" value="MGI"/>
</dbReference>
<dbReference type="GO" id="GO:1990913">
    <property type="term" value="C:sperm head plasma membrane"/>
    <property type="evidence" value="ECO:0000314"/>
    <property type="project" value="MGI"/>
</dbReference>
<dbReference type="GO" id="GO:0004222">
    <property type="term" value="F:metalloendopeptidase activity"/>
    <property type="evidence" value="ECO:0007669"/>
    <property type="project" value="InterPro"/>
</dbReference>
<dbReference type="GO" id="GO:0006508">
    <property type="term" value="P:proteolysis"/>
    <property type="evidence" value="ECO:0007669"/>
    <property type="project" value="InterPro"/>
</dbReference>
<dbReference type="CDD" id="cd04269">
    <property type="entry name" value="ZnMc_adamalysin_II_like"/>
    <property type="match status" value="1"/>
</dbReference>
<dbReference type="FunFam" id="3.40.390.10:FF:000002">
    <property type="entry name" value="Disintegrin and metalloproteinase domain-containing protein 22"/>
    <property type="match status" value="1"/>
</dbReference>
<dbReference type="FunFam" id="4.10.70.10:FF:000001">
    <property type="entry name" value="Disintegrin and metalloproteinase domain-containing protein 22"/>
    <property type="match status" value="1"/>
</dbReference>
<dbReference type="Gene3D" id="3.40.390.10">
    <property type="entry name" value="Collagenase (Catalytic Domain)"/>
    <property type="match status" value="1"/>
</dbReference>
<dbReference type="Gene3D" id="4.10.70.10">
    <property type="entry name" value="Disintegrin domain"/>
    <property type="match status" value="1"/>
</dbReference>
<dbReference type="InterPro" id="IPR006586">
    <property type="entry name" value="ADAM_Cys-rich"/>
</dbReference>
<dbReference type="InterPro" id="IPR018358">
    <property type="entry name" value="Disintegrin_CS"/>
</dbReference>
<dbReference type="InterPro" id="IPR001762">
    <property type="entry name" value="Disintegrin_dom"/>
</dbReference>
<dbReference type="InterPro" id="IPR036436">
    <property type="entry name" value="Disintegrin_dom_sf"/>
</dbReference>
<dbReference type="InterPro" id="IPR024079">
    <property type="entry name" value="MetalloPept_cat_dom_sf"/>
</dbReference>
<dbReference type="InterPro" id="IPR001590">
    <property type="entry name" value="Peptidase_M12B"/>
</dbReference>
<dbReference type="InterPro" id="IPR002870">
    <property type="entry name" value="Peptidase_M12B_N"/>
</dbReference>
<dbReference type="InterPro" id="IPR034027">
    <property type="entry name" value="Reprolysin_adamalysin"/>
</dbReference>
<dbReference type="PANTHER" id="PTHR11905">
    <property type="entry name" value="ADAM A DISINTEGRIN AND METALLOPROTEASE DOMAIN"/>
    <property type="match status" value="1"/>
</dbReference>
<dbReference type="PANTHER" id="PTHR11905:SF34">
    <property type="entry name" value="DISINTEGRIN AND METALLOPROTEINASE DOMAIN-CONTAINING PROTEIN 29"/>
    <property type="match status" value="1"/>
</dbReference>
<dbReference type="Pfam" id="PF08516">
    <property type="entry name" value="ADAM_CR"/>
    <property type="match status" value="1"/>
</dbReference>
<dbReference type="Pfam" id="PF00200">
    <property type="entry name" value="Disintegrin"/>
    <property type="match status" value="1"/>
</dbReference>
<dbReference type="Pfam" id="PF01562">
    <property type="entry name" value="Pep_M12B_propep"/>
    <property type="match status" value="1"/>
</dbReference>
<dbReference type="Pfam" id="PF01421">
    <property type="entry name" value="Reprolysin"/>
    <property type="match status" value="1"/>
</dbReference>
<dbReference type="PRINTS" id="PR00289">
    <property type="entry name" value="DISINTEGRIN"/>
</dbReference>
<dbReference type="SMART" id="SM00608">
    <property type="entry name" value="ACR"/>
    <property type="match status" value="1"/>
</dbReference>
<dbReference type="SMART" id="SM00050">
    <property type="entry name" value="DISIN"/>
    <property type="match status" value="1"/>
</dbReference>
<dbReference type="SUPFAM" id="SSF57552">
    <property type="entry name" value="Blood coagulation inhibitor (disintegrin)"/>
    <property type="match status" value="1"/>
</dbReference>
<dbReference type="SUPFAM" id="SSF55486">
    <property type="entry name" value="Metalloproteases ('zincins'), catalytic domain"/>
    <property type="match status" value="1"/>
</dbReference>
<dbReference type="PROSITE" id="PS50215">
    <property type="entry name" value="ADAM_MEPRO"/>
    <property type="match status" value="1"/>
</dbReference>
<dbReference type="PROSITE" id="PS00427">
    <property type="entry name" value="DISINTEGRIN_1"/>
    <property type="match status" value="1"/>
</dbReference>
<dbReference type="PROSITE" id="PS50214">
    <property type="entry name" value="DISINTEGRIN_2"/>
    <property type="match status" value="1"/>
</dbReference>
<reference key="1">
    <citation type="journal article" date="2004" name="Genomics">
        <title>Characterization and comparative genomic analysis of intronless Adams with testicular gene expression.</title>
        <authorList>
            <person name="Choi I."/>
            <person name="Oh J."/>
            <person name="Cho B.-N."/>
            <person name="Ahnn J."/>
            <person name="Jung Y.-K."/>
            <person name="Han Kim D."/>
            <person name="Cho C."/>
        </authorList>
    </citation>
    <scope>NUCLEOTIDE SEQUENCE [MRNA]</scope>
    <source>
        <strain>ICR</strain>
        <tissue>Testis</tissue>
    </source>
</reference>
<reference key="2">
    <citation type="journal article" date="2004" name="Genome Res.">
        <title>The status, quality, and expansion of the NIH full-length cDNA project: the Mammalian Gene Collection (MGC).</title>
        <authorList>
            <consortium name="The MGC Project Team"/>
        </authorList>
    </citation>
    <scope>NUCLEOTIDE SEQUENCE [LARGE SCALE MRNA]</scope>
    <source>
        <tissue>Testis</tissue>
    </source>
</reference>
<organism>
    <name type="scientific">Mus musculus</name>
    <name type="common">Mouse</name>
    <dbReference type="NCBI Taxonomy" id="10090"/>
    <lineage>
        <taxon>Eukaryota</taxon>
        <taxon>Metazoa</taxon>
        <taxon>Chordata</taxon>
        <taxon>Craniata</taxon>
        <taxon>Vertebrata</taxon>
        <taxon>Euteleostomi</taxon>
        <taxon>Mammalia</taxon>
        <taxon>Eutheria</taxon>
        <taxon>Euarchontoglires</taxon>
        <taxon>Glires</taxon>
        <taxon>Rodentia</taxon>
        <taxon>Myomorpha</taxon>
        <taxon>Muroidea</taxon>
        <taxon>Muridae</taxon>
        <taxon>Murinae</taxon>
        <taxon>Mus</taxon>
        <taxon>Mus</taxon>
    </lineage>
</organism>
<feature type="signal peptide" evidence="2">
    <location>
        <begin position="1"/>
        <end position="31"/>
    </location>
</feature>
<feature type="propeptide" id="PRO_0000373775" evidence="1">
    <location>
        <begin position="32"/>
        <end position="200"/>
    </location>
</feature>
<feature type="chain" id="PRO_0000373776" description="Disintegrin and metalloproteinase domain-containing protein 29">
    <location>
        <begin position="201"/>
        <end position="763"/>
    </location>
</feature>
<feature type="topological domain" description="Extracellular" evidence="2">
    <location>
        <begin position="201"/>
        <end position="684"/>
    </location>
</feature>
<feature type="transmembrane region" description="Helical" evidence="2">
    <location>
        <begin position="685"/>
        <end position="705"/>
    </location>
</feature>
<feature type="topological domain" description="Cytoplasmic" evidence="2">
    <location>
        <begin position="706"/>
        <end position="763"/>
    </location>
</feature>
<feature type="domain" description="Peptidase M12B" evidence="4">
    <location>
        <begin position="205"/>
        <end position="396"/>
    </location>
</feature>
<feature type="domain" description="Disintegrin" evidence="3">
    <location>
        <begin position="403"/>
        <end position="489"/>
    </location>
</feature>
<feature type="domain" description="EGF-like">
    <location>
        <begin position="631"/>
        <end position="660"/>
    </location>
</feature>
<feature type="region of interest" description="Disordered" evidence="5">
    <location>
        <begin position="712"/>
        <end position="763"/>
    </location>
</feature>
<feature type="compositionally biased region" description="Polar residues" evidence="5">
    <location>
        <begin position="751"/>
        <end position="763"/>
    </location>
</feature>
<feature type="glycosylation site" description="N-linked (GlcNAc...) asparagine" evidence="2">
    <location>
        <position position="164"/>
    </location>
</feature>
<feature type="glycosylation site" description="N-linked (GlcNAc...) asparagine" evidence="2">
    <location>
        <position position="177"/>
    </location>
</feature>
<feature type="glycosylation site" description="N-linked (GlcNAc...) asparagine" evidence="2">
    <location>
        <position position="223"/>
    </location>
</feature>
<feature type="glycosylation site" description="N-linked (GlcNAc...) asparagine" evidence="2">
    <location>
        <position position="374"/>
    </location>
</feature>
<feature type="glycosylation site" description="N-linked (GlcNAc...) asparagine" evidence="2">
    <location>
        <position position="424"/>
    </location>
</feature>
<feature type="glycosylation site" description="N-linked (GlcNAc...) asparagine" evidence="2">
    <location>
        <position position="434"/>
    </location>
</feature>
<feature type="glycosylation site" description="N-linked (GlcNAc...) asparagine" evidence="2">
    <location>
        <position position="475"/>
    </location>
</feature>
<feature type="glycosylation site" description="N-linked (GlcNAc...) asparagine" evidence="2">
    <location>
        <position position="584"/>
    </location>
</feature>
<feature type="disulfide bond" evidence="1">
    <location>
        <begin position="313"/>
        <end position="390"/>
    </location>
</feature>
<feature type="disulfide bond" evidence="1">
    <location>
        <begin position="353"/>
        <end position="375"/>
    </location>
</feature>
<feature type="disulfide bond" evidence="1">
    <location>
        <begin position="355"/>
        <end position="360"/>
    </location>
</feature>
<feature type="disulfide bond" evidence="1">
    <location>
        <begin position="461"/>
        <end position="481"/>
    </location>
</feature>
<feature type="disulfide bond" evidence="1">
    <location>
        <begin position="631"/>
        <end position="642"/>
    </location>
</feature>
<feature type="disulfide bond" evidence="1">
    <location>
        <begin position="636"/>
        <end position="648"/>
    </location>
</feature>
<feature type="disulfide bond" evidence="1">
    <location>
        <begin position="650"/>
        <end position="659"/>
    </location>
</feature>
<protein>
    <recommendedName>
        <fullName>Disintegrin and metalloproteinase domain-containing protein 29</fullName>
        <shortName>ADAM 29</shortName>
    </recommendedName>
</protein>